<comment type="function">
    <text evidence="2 3">Cytokine that plays a major role in the development of inflammatory and protective immune responses to microbial invaders and parasites by modulating immune cells of both the innate and adaptive immune systems. Stimulates the proliferation of natural killer cells, T-cells and B-cells and promotes the secretion of several cytokines. In monocytes, induces the production of IL8 and monocyte chemotactic protein 1/CCL2, two chemokines that attract neutrophils and monocytes respectively to sites of infection. Unlike most cytokines, which are secreted in soluble form, IL15 is expressed in association with its high affinity IL15RA on the surface of IL15-producing cells and delivers signals to target cells that express IL2RB and IL2RG receptor subunits. Binding to its receptor triggers the phosphorylation of JAK1 and JAK3 and the recruitment and subsequent phosphorylation of signal transducer and activator of transcription-3/STAT3 and STAT5 (By similarity). In mast cells, induces the rapid tyrosine phosphorylation of STAT6 and thereby controls mast cell survival and release of cytokines such as IL4 (By similarity).</text>
</comment>
<comment type="subcellular location">
    <subcellularLocation>
        <location>Secreted</location>
    </subcellularLocation>
</comment>
<comment type="similarity">
    <text evidence="5">Belongs to the IL-15/IL-21 family.</text>
</comment>
<name>IL15_FELCA</name>
<proteinExistence type="evidence at transcript level"/>
<evidence type="ECO:0000250" key="1"/>
<evidence type="ECO:0000250" key="2">
    <source>
        <dbReference type="UniProtKB" id="P40933"/>
    </source>
</evidence>
<evidence type="ECO:0000250" key="3">
    <source>
        <dbReference type="UniProtKB" id="P48346"/>
    </source>
</evidence>
<evidence type="ECO:0000255" key="4"/>
<evidence type="ECO:0000305" key="5"/>
<organism>
    <name type="scientific">Felis catus</name>
    <name type="common">Cat</name>
    <name type="synonym">Felis silvestris catus</name>
    <dbReference type="NCBI Taxonomy" id="9685"/>
    <lineage>
        <taxon>Eukaryota</taxon>
        <taxon>Metazoa</taxon>
        <taxon>Chordata</taxon>
        <taxon>Craniata</taxon>
        <taxon>Vertebrata</taxon>
        <taxon>Euteleostomi</taxon>
        <taxon>Mammalia</taxon>
        <taxon>Eutheria</taxon>
        <taxon>Laurasiatheria</taxon>
        <taxon>Carnivora</taxon>
        <taxon>Feliformia</taxon>
        <taxon>Felidae</taxon>
        <taxon>Felinae</taxon>
        <taxon>Felis</taxon>
    </lineage>
</organism>
<dbReference type="EMBL" id="AF108148">
    <property type="protein sequence ID" value="AAD05268.1"/>
    <property type="molecule type" value="mRNA"/>
</dbReference>
<dbReference type="RefSeq" id="NP_001009207.1">
    <property type="nucleotide sequence ID" value="NM_001009207.1"/>
</dbReference>
<dbReference type="SMR" id="O97687"/>
<dbReference type="STRING" id="9685.ENSFCAP00000016509"/>
<dbReference type="GlyCosmos" id="O97687">
    <property type="glycosylation" value="2 sites, No reported glycans"/>
</dbReference>
<dbReference type="PaxDb" id="9685-ENSFCAP00000016509"/>
<dbReference type="GeneID" id="493682"/>
<dbReference type="KEGG" id="fca:493682"/>
<dbReference type="CTD" id="3600"/>
<dbReference type="eggNOG" id="ENOG502SCMF">
    <property type="taxonomic scope" value="Eukaryota"/>
</dbReference>
<dbReference type="InParanoid" id="O97687"/>
<dbReference type="OrthoDB" id="8905762at2759"/>
<dbReference type="Proteomes" id="UP000011712">
    <property type="component" value="Unplaced"/>
</dbReference>
<dbReference type="GO" id="GO:0005615">
    <property type="term" value="C:extracellular space"/>
    <property type="evidence" value="ECO:0000318"/>
    <property type="project" value="GO_Central"/>
</dbReference>
<dbReference type="GO" id="GO:0005125">
    <property type="term" value="F:cytokine activity"/>
    <property type="evidence" value="ECO:0000318"/>
    <property type="project" value="GO_Central"/>
</dbReference>
<dbReference type="GO" id="GO:0005126">
    <property type="term" value="F:cytokine receptor binding"/>
    <property type="evidence" value="ECO:0007669"/>
    <property type="project" value="InterPro"/>
</dbReference>
<dbReference type="GO" id="GO:0006955">
    <property type="term" value="P:immune response"/>
    <property type="evidence" value="ECO:0007669"/>
    <property type="project" value="InterPro"/>
</dbReference>
<dbReference type="GO" id="GO:0035723">
    <property type="term" value="P:interleukin-15-mediated signaling pathway"/>
    <property type="evidence" value="ECO:0000250"/>
    <property type="project" value="UniProtKB"/>
</dbReference>
<dbReference type="GO" id="GO:0042119">
    <property type="term" value="P:neutrophil activation"/>
    <property type="evidence" value="ECO:0000250"/>
    <property type="project" value="UniProtKB"/>
</dbReference>
<dbReference type="GO" id="GO:0001819">
    <property type="term" value="P:positive regulation of cytokine production"/>
    <property type="evidence" value="ECO:0000318"/>
    <property type="project" value="GO_Central"/>
</dbReference>
<dbReference type="GO" id="GO:0050778">
    <property type="term" value="P:positive regulation of immune response"/>
    <property type="evidence" value="ECO:0000318"/>
    <property type="project" value="GO_Central"/>
</dbReference>
<dbReference type="GO" id="GO:0050731">
    <property type="term" value="P:positive regulation of peptidyl-tyrosine phosphorylation"/>
    <property type="evidence" value="ECO:0000250"/>
    <property type="project" value="UniProtKB"/>
</dbReference>
<dbReference type="GO" id="GO:0050766">
    <property type="term" value="P:positive regulation of phagocytosis"/>
    <property type="evidence" value="ECO:0000250"/>
    <property type="project" value="UniProtKB"/>
</dbReference>
<dbReference type="GO" id="GO:0042102">
    <property type="term" value="P:positive regulation of T cell proliferation"/>
    <property type="evidence" value="ECO:0000318"/>
    <property type="project" value="GO_Central"/>
</dbReference>
<dbReference type="FunFam" id="1.20.1250.70:FF:000001">
    <property type="entry name" value="Interleukin"/>
    <property type="match status" value="1"/>
</dbReference>
<dbReference type="Gene3D" id="1.20.1250.70">
    <property type="entry name" value="Interleukin-15/Interleukin-21"/>
    <property type="match status" value="1"/>
</dbReference>
<dbReference type="InterPro" id="IPR009079">
    <property type="entry name" value="4_helix_cytokine-like_core"/>
</dbReference>
<dbReference type="InterPro" id="IPR020439">
    <property type="entry name" value="IL-15"/>
</dbReference>
<dbReference type="InterPro" id="IPR003443">
    <property type="entry name" value="IL-15/IL-21_fam"/>
</dbReference>
<dbReference type="InterPro" id="IPR020466">
    <property type="entry name" value="IL-15_mml"/>
</dbReference>
<dbReference type="PANTHER" id="PTHR14356:SF3">
    <property type="entry name" value="INTERLEUKIN-15"/>
    <property type="match status" value="1"/>
</dbReference>
<dbReference type="PANTHER" id="PTHR14356">
    <property type="entry name" value="INTERLEUKIN-15-RELATED"/>
    <property type="match status" value="1"/>
</dbReference>
<dbReference type="Pfam" id="PF02372">
    <property type="entry name" value="IL15"/>
    <property type="match status" value="1"/>
</dbReference>
<dbReference type="PRINTS" id="PR01947">
    <property type="entry name" value="INTLKN15MAML"/>
</dbReference>
<dbReference type="PRINTS" id="PR01930">
    <property type="entry name" value="INTRLEUKIN15"/>
</dbReference>
<dbReference type="SUPFAM" id="SSF47266">
    <property type="entry name" value="4-helical cytokines"/>
    <property type="match status" value="1"/>
</dbReference>
<gene>
    <name type="primary">IL15</name>
</gene>
<feature type="signal peptide" evidence="4">
    <location>
        <begin position="1"/>
        <end position="29"/>
    </location>
</feature>
<feature type="propeptide" id="PRO_0000015395" evidence="4">
    <location>
        <begin position="30"/>
        <end position="48"/>
    </location>
</feature>
<feature type="chain" id="PRO_0000015396" description="Interleukin-15">
    <location>
        <begin position="49"/>
        <end position="162"/>
    </location>
</feature>
<feature type="glycosylation site" description="N-linked (GlcNAc...) asparagine" evidence="4">
    <location>
        <position position="104"/>
    </location>
</feature>
<feature type="glycosylation site" description="N-linked (GlcNAc...) asparagine" evidence="4">
    <location>
        <position position="127"/>
    </location>
</feature>
<feature type="disulfide bond" evidence="1">
    <location>
        <begin position="83"/>
        <end position="133"/>
    </location>
</feature>
<feature type="disulfide bond" evidence="1">
    <location>
        <begin position="90"/>
        <end position="136"/>
    </location>
</feature>
<sequence>MRILKPYLRSTSIQCYLCLLLNSHFLTEACIPVFILSCINAGLPKTEANWQDVISDLKIIDKIIQSLHIDATLYTESDVHPNCKVTAMKCFLLELHVISLESKNETIHQTVENIIILANSGLSSNRNITETGCKECEELEEKNIKEFLQSFVHIVQMFINTS</sequence>
<keyword id="KW-0202">Cytokine</keyword>
<keyword id="KW-1015">Disulfide bond</keyword>
<keyword id="KW-0325">Glycoprotein</keyword>
<keyword id="KW-1185">Reference proteome</keyword>
<keyword id="KW-0964">Secreted</keyword>
<keyword id="KW-0732">Signal</keyword>
<accession>O97687</accession>
<reference key="1">
    <citation type="journal article" date="2005" name="Cytokine">
        <title>Cloning and expression of feline interleukin 15.</title>
        <authorList>
            <person name="Dean G.A."/>
            <person name="Barger A."/>
            <person name="LaVoy A."/>
        </authorList>
    </citation>
    <scope>NUCLEOTIDE SEQUENCE [MRNA]</scope>
    <source>
        <tissue>Lymph node</tissue>
    </source>
</reference>
<protein>
    <recommendedName>
        <fullName>Interleukin-15</fullName>
        <shortName>IL-15</shortName>
    </recommendedName>
</protein>